<gene>
    <name evidence="2" type="primary">ppk</name>
    <name type="ordered locus">STM2501</name>
</gene>
<dbReference type="EC" id="2.7.4.1" evidence="2"/>
<dbReference type="EMBL" id="AF085682">
    <property type="protein sequence ID" value="AAC34890.1"/>
    <property type="molecule type" value="Genomic_DNA"/>
</dbReference>
<dbReference type="EMBL" id="AE006468">
    <property type="protein sequence ID" value="AAL21395.1"/>
    <property type="molecule type" value="Genomic_DNA"/>
</dbReference>
<dbReference type="RefSeq" id="NP_461436.1">
    <property type="nucleotide sequence ID" value="NC_003197.2"/>
</dbReference>
<dbReference type="SMR" id="O86090"/>
<dbReference type="STRING" id="99287.STM2501"/>
<dbReference type="PaxDb" id="99287-STM2501"/>
<dbReference type="GeneID" id="1254023"/>
<dbReference type="KEGG" id="stm:STM2501"/>
<dbReference type="PATRIC" id="fig|99287.12.peg.2640"/>
<dbReference type="HOGENOM" id="CLU_009678_6_1_6"/>
<dbReference type="OMA" id="MTLYRVG"/>
<dbReference type="PhylomeDB" id="O86090"/>
<dbReference type="BioCyc" id="SENT99287:STM2501-MONOMER"/>
<dbReference type="Proteomes" id="UP000001014">
    <property type="component" value="Chromosome"/>
</dbReference>
<dbReference type="GO" id="GO:0016020">
    <property type="term" value="C:membrane"/>
    <property type="evidence" value="ECO:0000318"/>
    <property type="project" value="GO_Central"/>
</dbReference>
<dbReference type="GO" id="GO:0009358">
    <property type="term" value="C:polyphosphate kinase complex"/>
    <property type="evidence" value="ECO:0007669"/>
    <property type="project" value="InterPro"/>
</dbReference>
<dbReference type="GO" id="GO:0005524">
    <property type="term" value="F:ATP binding"/>
    <property type="evidence" value="ECO:0007669"/>
    <property type="project" value="UniProtKB-KW"/>
</dbReference>
<dbReference type="GO" id="GO:0046872">
    <property type="term" value="F:metal ion binding"/>
    <property type="evidence" value="ECO:0007669"/>
    <property type="project" value="UniProtKB-KW"/>
</dbReference>
<dbReference type="GO" id="GO:0008976">
    <property type="term" value="F:polyphosphate kinase activity"/>
    <property type="evidence" value="ECO:0000318"/>
    <property type="project" value="GO_Central"/>
</dbReference>
<dbReference type="GO" id="GO:0006799">
    <property type="term" value="P:polyphosphate biosynthetic process"/>
    <property type="evidence" value="ECO:0000318"/>
    <property type="project" value="GO_Central"/>
</dbReference>
<dbReference type="CDD" id="cd09167">
    <property type="entry name" value="PLDc_EcPPK1_C2_like"/>
    <property type="match status" value="1"/>
</dbReference>
<dbReference type="FunFam" id="1.20.58.310:FF:000001">
    <property type="entry name" value="Polyphosphate kinase"/>
    <property type="match status" value="1"/>
</dbReference>
<dbReference type="FunFam" id="3.30.1840.10:FF:000001">
    <property type="entry name" value="Polyphosphate kinase"/>
    <property type="match status" value="1"/>
</dbReference>
<dbReference type="FunFam" id="3.30.870.10:FF:000001">
    <property type="entry name" value="Polyphosphate kinase"/>
    <property type="match status" value="1"/>
</dbReference>
<dbReference type="FunFam" id="3.30.870.10:FF:000007">
    <property type="entry name" value="Polyphosphate kinase"/>
    <property type="match status" value="1"/>
</dbReference>
<dbReference type="Gene3D" id="3.30.870.10">
    <property type="entry name" value="Endonuclease Chain A"/>
    <property type="match status" value="2"/>
</dbReference>
<dbReference type="Gene3D" id="3.30.1840.10">
    <property type="entry name" value="Polyphosphate kinase middle domain"/>
    <property type="match status" value="1"/>
</dbReference>
<dbReference type="Gene3D" id="1.20.58.310">
    <property type="entry name" value="Polyphosphate kinase N-terminal domain"/>
    <property type="match status" value="1"/>
</dbReference>
<dbReference type="HAMAP" id="MF_00347">
    <property type="entry name" value="Polyphosphate_kinase"/>
    <property type="match status" value="1"/>
</dbReference>
<dbReference type="InterPro" id="IPR001736">
    <property type="entry name" value="PLipase_D/transphosphatidylase"/>
</dbReference>
<dbReference type="InterPro" id="IPR003414">
    <property type="entry name" value="PP_kinase"/>
</dbReference>
<dbReference type="InterPro" id="IPR041108">
    <property type="entry name" value="PP_kinase_C_1"/>
</dbReference>
<dbReference type="InterPro" id="IPR024953">
    <property type="entry name" value="PP_kinase_middle"/>
</dbReference>
<dbReference type="InterPro" id="IPR036830">
    <property type="entry name" value="PP_kinase_middle_dom_sf"/>
</dbReference>
<dbReference type="InterPro" id="IPR025200">
    <property type="entry name" value="PPK_C_dom2"/>
</dbReference>
<dbReference type="InterPro" id="IPR025198">
    <property type="entry name" value="PPK_N_dom"/>
</dbReference>
<dbReference type="InterPro" id="IPR036832">
    <property type="entry name" value="PPK_N_dom_sf"/>
</dbReference>
<dbReference type="NCBIfam" id="TIGR03705">
    <property type="entry name" value="poly_P_kin"/>
    <property type="match status" value="1"/>
</dbReference>
<dbReference type="NCBIfam" id="NF003917">
    <property type="entry name" value="PRK05443.1-1"/>
    <property type="match status" value="1"/>
</dbReference>
<dbReference type="PANTHER" id="PTHR30218">
    <property type="entry name" value="POLYPHOSPHATE KINASE"/>
    <property type="match status" value="1"/>
</dbReference>
<dbReference type="PANTHER" id="PTHR30218:SF0">
    <property type="entry name" value="POLYPHOSPHATE KINASE"/>
    <property type="match status" value="1"/>
</dbReference>
<dbReference type="Pfam" id="PF02503">
    <property type="entry name" value="PP_kinase"/>
    <property type="match status" value="1"/>
</dbReference>
<dbReference type="Pfam" id="PF13090">
    <property type="entry name" value="PP_kinase_C"/>
    <property type="match status" value="1"/>
</dbReference>
<dbReference type="Pfam" id="PF17941">
    <property type="entry name" value="PP_kinase_C_1"/>
    <property type="match status" value="1"/>
</dbReference>
<dbReference type="Pfam" id="PF13089">
    <property type="entry name" value="PP_kinase_N"/>
    <property type="match status" value="1"/>
</dbReference>
<dbReference type="PIRSF" id="PIRSF015589">
    <property type="entry name" value="PP_kinase"/>
    <property type="match status" value="1"/>
</dbReference>
<dbReference type="SUPFAM" id="SSF56024">
    <property type="entry name" value="Phospholipase D/nuclease"/>
    <property type="match status" value="2"/>
</dbReference>
<dbReference type="SUPFAM" id="SSF143724">
    <property type="entry name" value="PHP14-like"/>
    <property type="match status" value="1"/>
</dbReference>
<dbReference type="SUPFAM" id="SSF140356">
    <property type="entry name" value="PPK N-terminal domain-like"/>
    <property type="match status" value="1"/>
</dbReference>
<dbReference type="PROSITE" id="PS50035">
    <property type="entry name" value="PLD"/>
    <property type="match status" value="1"/>
</dbReference>
<proteinExistence type="inferred from homology"/>
<name>PPK1_SALTY</name>
<keyword id="KW-0067">ATP-binding</keyword>
<keyword id="KW-0418">Kinase</keyword>
<keyword id="KW-0460">Magnesium</keyword>
<keyword id="KW-0479">Metal-binding</keyword>
<keyword id="KW-0547">Nucleotide-binding</keyword>
<keyword id="KW-0597">Phosphoprotein</keyword>
<keyword id="KW-1185">Reference proteome</keyword>
<keyword id="KW-0808">Transferase</keyword>
<sequence length="688" mass="80456">MGQEKLYIEKELSWLAFNERVLQEAADKSNPLIERMRFLGIYSNNLDEFYKVRFAELKRRIIISEEQGSNSHSRHLLGKIQSRVLKADQEFDGLYNELLLEMARNQIFLINERQLSVNQQSWLRHYFKHYLRQHITPILINRETDLVQFLKDDYTYLAVEIIRGDTINYALLEIPSDKVPRFVNLPPETPRRRKPMILLDNILRYCLDDIFKGFFDYDALNAYSMKMTRDAEYDLVHEMESSLMELMSSSLKQRLTAEPVRFVYQRDMPAALVDVLREKLTISRYDSIVPGGRYHNFKDFINFPNVGKANLVNKPLPRLRHLWFDKEKFRNGFDAIRERDVLLYYPYHTFEHVLELLRQASFDPSVLAIKINIYRVAKDSRIIDSMIHAAHNGKKVTVVVELQARFDEEANIHWAKRLTEAGVHVIFSAPGLKIHAKLFLISRKEGDDVVRYAHIGTGNFNEKTARLYTDYSLLTADARITNEVRRVFNFIENPYRPVTFDYLMVSPQNSRRLLYEMIDREIANAQQGLPSGITLKLNNLVDKGLVDRLYAASGSGVQVNLLVRGMCSLIPQLEGISDNIRAISIVDRYLEHDRVYIFENGGDKQVWLSSADWMTRNIDYRIEVATPILDPRLKQRVLDIIDILFSDTVKARFIDKELSNRYVPRGNRRKVQAQLAIYDYIKSLEQPD</sequence>
<feature type="initiator methionine" description="Removed" evidence="1">
    <location>
        <position position="1"/>
    </location>
</feature>
<feature type="chain" id="PRO_0000128656" description="Polyphosphate kinase">
    <location>
        <begin position="2"/>
        <end position="688"/>
    </location>
</feature>
<feature type="domain" description="PLD phosphodiesterase" evidence="2">
    <location>
        <begin position="430"/>
        <end position="464"/>
    </location>
</feature>
<feature type="active site" description="Phosphohistidine intermediate" evidence="2">
    <location>
        <position position="435"/>
    </location>
</feature>
<feature type="binding site" evidence="2">
    <location>
        <position position="45"/>
    </location>
    <ligand>
        <name>ATP</name>
        <dbReference type="ChEBI" id="CHEBI:30616"/>
    </ligand>
</feature>
<feature type="binding site" evidence="2">
    <location>
        <position position="375"/>
    </location>
    <ligand>
        <name>Mg(2+)</name>
        <dbReference type="ChEBI" id="CHEBI:18420"/>
    </ligand>
</feature>
<feature type="binding site" evidence="2">
    <location>
        <position position="405"/>
    </location>
    <ligand>
        <name>Mg(2+)</name>
        <dbReference type="ChEBI" id="CHEBI:18420"/>
    </ligand>
</feature>
<feature type="binding site" evidence="2">
    <location>
        <position position="468"/>
    </location>
    <ligand>
        <name>ATP</name>
        <dbReference type="ChEBI" id="CHEBI:30616"/>
    </ligand>
</feature>
<feature type="binding site" evidence="2">
    <location>
        <position position="564"/>
    </location>
    <ligand>
        <name>ATP</name>
        <dbReference type="ChEBI" id="CHEBI:30616"/>
    </ligand>
</feature>
<feature type="binding site" evidence="2">
    <location>
        <position position="592"/>
    </location>
    <ligand>
        <name>ATP</name>
        <dbReference type="ChEBI" id="CHEBI:30616"/>
    </ligand>
</feature>
<organism>
    <name type="scientific">Salmonella typhimurium (strain LT2 / SGSC1412 / ATCC 700720)</name>
    <dbReference type="NCBI Taxonomy" id="99287"/>
    <lineage>
        <taxon>Bacteria</taxon>
        <taxon>Pseudomonadati</taxon>
        <taxon>Pseudomonadota</taxon>
        <taxon>Gammaproteobacteria</taxon>
        <taxon>Enterobacterales</taxon>
        <taxon>Enterobacteriaceae</taxon>
        <taxon>Salmonella</taxon>
    </lineage>
</organism>
<reference key="1">
    <citation type="submission" date="1998-08" db="EMBL/GenBank/DDBJ databases">
        <title>Polyphosphate kinase (ppk) and exopolyphosphatase (ppx) genes in Salmonella typhimurium.</title>
        <authorList>
            <person name="Kim K.S."/>
            <person name="Fraley C.D."/>
            <person name="Kornberg A."/>
        </authorList>
    </citation>
    <scope>NUCLEOTIDE SEQUENCE [GENOMIC DNA]</scope>
    <source>
        <strain>WRAY</strain>
    </source>
</reference>
<reference key="2">
    <citation type="journal article" date="2001" name="Nature">
        <title>Complete genome sequence of Salmonella enterica serovar Typhimurium LT2.</title>
        <authorList>
            <person name="McClelland M."/>
            <person name="Sanderson K.E."/>
            <person name="Spieth J."/>
            <person name="Clifton S.W."/>
            <person name="Latreille P."/>
            <person name="Courtney L."/>
            <person name="Porwollik S."/>
            <person name="Ali J."/>
            <person name="Dante M."/>
            <person name="Du F."/>
            <person name="Hou S."/>
            <person name="Layman D."/>
            <person name="Leonard S."/>
            <person name="Nguyen C."/>
            <person name="Scott K."/>
            <person name="Holmes A."/>
            <person name="Grewal N."/>
            <person name="Mulvaney E."/>
            <person name="Ryan E."/>
            <person name="Sun H."/>
            <person name="Florea L."/>
            <person name="Miller W."/>
            <person name="Stoneking T."/>
            <person name="Nhan M."/>
            <person name="Waterston R."/>
            <person name="Wilson R.K."/>
        </authorList>
    </citation>
    <scope>NUCLEOTIDE SEQUENCE [LARGE SCALE GENOMIC DNA]</scope>
    <source>
        <strain>LT2 / SGSC1412 / ATCC 700720</strain>
    </source>
</reference>
<comment type="function">
    <text evidence="2">Catalyzes the reversible transfer of the terminal phosphate of ATP to form a long-chain polyphosphate (polyP).</text>
</comment>
<comment type="catalytic activity">
    <reaction evidence="2">
        <text>[phosphate](n) + ATP = [phosphate](n+1) + ADP</text>
        <dbReference type="Rhea" id="RHEA:19573"/>
        <dbReference type="Rhea" id="RHEA-COMP:9859"/>
        <dbReference type="Rhea" id="RHEA-COMP:14280"/>
        <dbReference type="ChEBI" id="CHEBI:16838"/>
        <dbReference type="ChEBI" id="CHEBI:30616"/>
        <dbReference type="ChEBI" id="CHEBI:456216"/>
        <dbReference type="EC" id="2.7.4.1"/>
    </reaction>
</comment>
<comment type="cofactor">
    <cofactor evidence="2">
        <name>Mg(2+)</name>
        <dbReference type="ChEBI" id="CHEBI:18420"/>
    </cofactor>
</comment>
<comment type="PTM">
    <text evidence="2">An intermediate of this reaction is the autophosphorylated ppk in which a phosphate is covalently linked to a histidine residue through a N-P bond.</text>
</comment>
<comment type="similarity">
    <text evidence="2">Belongs to the polyphosphate kinase 1 (PPK1) family.</text>
</comment>
<accession>O86090</accession>
<protein>
    <recommendedName>
        <fullName evidence="2">Polyphosphate kinase</fullName>
        <ecNumber evidence="2">2.7.4.1</ecNumber>
    </recommendedName>
    <alternativeName>
        <fullName evidence="2">ATP-polyphosphate phosphotransferase</fullName>
    </alternativeName>
    <alternativeName>
        <fullName evidence="2">Polyphosphoric acid kinase</fullName>
    </alternativeName>
</protein>
<evidence type="ECO:0000250" key="1"/>
<evidence type="ECO:0000255" key="2">
    <source>
        <dbReference type="HAMAP-Rule" id="MF_00347"/>
    </source>
</evidence>